<organism>
    <name type="scientific">Prochlorococcus marinus (strain NATL1A)</name>
    <dbReference type="NCBI Taxonomy" id="167555"/>
    <lineage>
        <taxon>Bacteria</taxon>
        <taxon>Bacillati</taxon>
        <taxon>Cyanobacteriota</taxon>
        <taxon>Cyanophyceae</taxon>
        <taxon>Synechococcales</taxon>
        <taxon>Prochlorococcaceae</taxon>
        <taxon>Prochlorococcus</taxon>
    </lineage>
</organism>
<accession>A2C1Z3</accession>
<evidence type="ECO:0000255" key="1">
    <source>
        <dbReference type="HAMAP-Rule" id="MF_00658"/>
    </source>
</evidence>
<sequence length="145" mass="16471">MLNISHYKIIAIGKIRKKWIQEGIEMYLKRLPGLEVKEIKDSTQLKEEHTIKEIISKNEFLVTLNENGQSFTSKQLATKLLNSHNQNITFVIGGASGLTSSLNNLASWQLSLSPLTFPHEIARLLLIEQLYRAKTITQGGPYHKE</sequence>
<feature type="chain" id="PRO_1000061821" description="Ribosomal RNA large subunit methyltransferase H">
    <location>
        <begin position="1"/>
        <end position="145"/>
    </location>
</feature>
<feature type="binding site" evidence="1">
    <location>
        <position position="64"/>
    </location>
    <ligand>
        <name>S-adenosyl-L-methionine</name>
        <dbReference type="ChEBI" id="CHEBI:59789"/>
    </ligand>
</feature>
<feature type="binding site" evidence="1">
    <location>
        <position position="93"/>
    </location>
    <ligand>
        <name>S-adenosyl-L-methionine</name>
        <dbReference type="ChEBI" id="CHEBI:59789"/>
    </ligand>
</feature>
<feature type="binding site" evidence="1">
    <location>
        <begin position="112"/>
        <end position="117"/>
    </location>
    <ligand>
        <name>S-adenosyl-L-methionine</name>
        <dbReference type="ChEBI" id="CHEBI:59789"/>
    </ligand>
</feature>
<protein>
    <recommendedName>
        <fullName evidence="1">Ribosomal RNA large subunit methyltransferase H</fullName>
        <ecNumber evidence="1">2.1.1.177</ecNumber>
    </recommendedName>
    <alternativeName>
        <fullName evidence="1">23S rRNA (pseudouridine1915-N3)-methyltransferase</fullName>
    </alternativeName>
    <alternativeName>
        <fullName evidence="1">23S rRNA m3Psi1915 methyltransferase</fullName>
    </alternativeName>
    <alternativeName>
        <fullName evidence="1">rRNA (pseudouridine-N3-)-methyltransferase RlmH</fullName>
    </alternativeName>
</protein>
<comment type="function">
    <text evidence="1">Specifically methylates the pseudouridine at position 1915 (m3Psi1915) in 23S rRNA.</text>
</comment>
<comment type="catalytic activity">
    <reaction evidence="1">
        <text>pseudouridine(1915) in 23S rRNA + S-adenosyl-L-methionine = N(3)-methylpseudouridine(1915) in 23S rRNA + S-adenosyl-L-homocysteine + H(+)</text>
        <dbReference type="Rhea" id="RHEA:42752"/>
        <dbReference type="Rhea" id="RHEA-COMP:10221"/>
        <dbReference type="Rhea" id="RHEA-COMP:10222"/>
        <dbReference type="ChEBI" id="CHEBI:15378"/>
        <dbReference type="ChEBI" id="CHEBI:57856"/>
        <dbReference type="ChEBI" id="CHEBI:59789"/>
        <dbReference type="ChEBI" id="CHEBI:65314"/>
        <dbReference type="ChEBI" id="CHEBI:74486"/>
        <dbReference type="EC" id="2.1.1.177"/>
    </reaction>
</comment>
<comment type="subunit">
    <text evidence="1">Homodimer.</text>
</comment>
<comment type="subcellular location">
    <subcellularLocation>
        <location evidence="1">Cytoplasm</location>
    </subcellularLocation>
</comment>
<comment type="similarity">
    <text evidence="1">Belongs to the RNA methyltransferase RlmH family.</text>
</comment>
<reference key="1">
    <citation type="journal article" date="2007" name="PLoS Genet.">
        <title>Patterns and implications of gene gain and loss in the evolution of Prochlorococcus.</title>
        <authorList>
            <person name="Kettler G.C."/>
            <person name="Martiny A.C."/>
            <person name="Huang K."/>
            <person name="Zucker J."/>
            <person name="Coleman M.L."/>
            <person name="Rodrigue S."/>
            <person name="Chen F."/>
            <person name="Lapidus A."/>
            <person name="Ferriera S."/>
            <person name="Johnson J."/>
            <person name="Steglich C."/>
            <person name="Church G.M."/>
            <person name="Richardson P."/>
            <person name="Chisholm S.W."/>
        </authorList>
    </citation>
    <scope>NUCLEOTIDE SEQUENCE [LARGE SCALE GENOMIC DNA]</scope>
    <source>
        <strain>NATL1A</strain>
    </source>
</reference>
<dbReference type="EC" id="2.1.1.177" evidence="1"/>
<dbReference type="EMBL" id="CP000553">
    <property type="protein sequence ID" value="ABM75503.1"/>
    <property type="molecule type" value="Genomic_DNA"/>
</dbReference>
<dbReference type="RefSeq" id="WP_011823637.1">
    <property type="nucleotide sequence ID" value="NC_008819.1"/>
</dbReference>
<dbReference type="SMR" id="A2C1Z3"/>
<dbReference type="KEGG" id="pme:NATL1_09451"/>
<dbReference type="eggNOG" id="COG1576">
    <property type="taxonomic scope" value="Bacteria"/>
</dbReference>
<dbReference type="HOGENOM" id="CLU_100552_0_0_3"/>
<dbReference type="Proteomes" id="UP000002592">
    <property type="component" value="Chromosome"/>
</dbReference>
<dbReference type="GO" id="GO:0005737">
    <property type="term" value="C:cytoplasm"/>
    <property type="evidence" value="ECO:0007669"/>
    <property type="project" value="UniProtKB-SubCell"/>
</dbReference>
<dbReference type="GO" id="GO:0070038">
    <property type="term" value="F:rRNA (pseudouridine-N3-)-methyltransferase activity"/>
    <property type="evidence" value="ECO:0007669"/>
    <property type="project" value="UniProtKB-UniRule"/>
</dbReference>
<dbReference type="CDD" id="cd18081">
    <property type="entry name" value="RlmH-like"/>
    <property type="match status" value="1"/>
</dbReference>
<dbReference type="Gene3D" id="3.40.1280.10">
    <property type="match status" value="1"/>
</dbReference>
<dbReference type="HAMAP" id="MF_00658">
    <property type="entry name" value="23SrRNA_methyltr_H"/>
    <property type="match status" value="1"/>
</dbReference>
<dbReference type="InterPro" id="IPR029028">
    <property type="entry name" value="Alpha/beta_knot_MTases"/>
</dbReference>
<dbReference type="InterPro" id="IPR003742">
    <property type="entry name" value="RlmH-like"/>
</dbReference>
<dbReference type="InterPro" id="IPR029026">
    <property type="entry name" value="tRNA_m1G_MTases_N"/>
</dbReference>
<dbReference type="PANTHER" id="PTHR33603">
    <property type="entry name" value="METHYLTRANSFERASE"/>
    <property type="match status" value="1"/>
</dbReference>
<dbReference type="PANTHER" id="PTHR33603:SF1">
    <property type="entry name" value="RIBOSOMAL RNA LARGE SUBUNIT METHYLTRANSFERASE H"/>
    <property type="match status" value="1"/>
</dbReference>
<dbReference type="Pfam" id="PF02590">
    <property type="entry name" value="SPOUT_MTase"/>
    <property type="match status" value="1"/>
</dbReference>
<dbReference type="PIRSF" id="PIRSF004505">
    <property type="entry name" value="MT_bac"/>
    <property type="match status" value="1"/>
</dbReference>
<dbReference type="SUPFAM" id="SSF75217">
    <property type="entry name" value="alpha/beta knot"/>
    <property type="match status" value="1"/>
</dbReference>
<name>RLMH_PROM1</name>
<keyword id="KW-0963">Cytoplasm</keyword>
<keyword id="KW-0489">Methyltransferase</keyword>
<keyword id="KW-0698">rRNA processing</keyword>
<keyword id="KW-0949">S-adenosyl-L-methionine</keyword>
<keyword id="KW-0808">Transferase</keyword>
<gene>
    <name evidence="1" type="primary">rlmH</name>
    <name type="ordered locus">NATL1_09451</name>
</gene>
<proteinExistence type="inferred from homology"/>